<name>EFG2_METCA</name>
<organism>
    <name type="scientific">Methylococcus capsulatus (strain ATCC 33009 / NCIMB 11132 / Bath)</name>
    <dbReference type="NCBI Taxonomy" id="243233"/>
    <lineage>
        <taxon>Bacteria</taxon>
        <taxon>Pseudomonadati</taxon>
        <taxon>Pseudomonadota</taxon>
        <taxon>Gammaproteobacteria</taxon>
        <taxon>Methylococcales</taxon>
        <taxon>Methylococcaceae</taxon>
        <taxon>Methylococcus</taxon>
    </lineage>
</organism>
<protein>
    <recommendedName>
        <fullName evidence="1">Elongation factor G 2</fullName>
        <shortName evidence="1">EF-G 2</shortName>
    </recommendedName>
</protein>
<dbReference type="EMBL" id="AE017282">
    <property type="protein sequence ID" value="AAU91597.1"/>
    <property type="molecule type" value="Genomic_DNA"/>
</dbReference>
<dbReference type="RefSeq" id="WP_010961602.1">
    <property type="nucleotide sequence ID" value="NC_002977.6"/>
</dbReference>
<dbReference type="SMR" id="Q605A9"/>
<dbReference type="STRING" id="243233.MCA2375"/>
<dbReference type="GeneID" id="88224577"/>
<dbReference type="KEGG" id="mca:MCA2375"/>
<dbReference type="eggNOG" id="COG0480">
    <property type="taxonomic scope" value="Bacteria"/>
</dbReference>
<dbReference type="HOGENOM" id="CLU_002794_4_1_6"/>
<dbReference type="Proteomes" id="UP000006821">
    <property type="component" value="Chromosome"/>
</dbReference>
<dbReference type="GO" id="GO:0005737">
    <property type="term" value="C:cytoplasm"/>
    <property type="evidence" value="ECO:0007669"/>
    <property type="project" value="UniProtKB-SubCell"/>
</dbReference>
<dbReference type="GO" id="GO:0005525">
    <property type="term" value="F:GTP binding"/>
    <property type="evidence" value="ECO:0007669"/>
    <property type="project" value="UniProtKB-UniRule"/>
</dbReference>
<dbReference type="GO" id="GO:0003924">
    <property type="term" value="F:GTPase activity"/>
    <property type="evidence" value="ECO:0007669"/>
    <property type="project" value="InterPro"/>
</dbReference>
<dbReference type="GO" id="GO:0097216">
    <property type="term" value="F:guanosine tetraphosphate binding"/>
    <property type="evidence" value="ECO:0007669"/>
    <property type="project" value="UniProtKB-ARBA"/>
</dbReference>
<dbReference type="GO" id="GO:0003746">
    <property type="term" value="F:translation elongation factor activity"/>
    <property type="evidence" value="ECO:0007669"/>
    <property type="project" value="UniProtKB-UniRule"/>
</dbReference>
<dbReference type="GO" id="GO:0032790">
    <property type="term" value="P:ribosome disassembly"/>
    <property type="evidence" value="ECO:0007669"/>
    <property type="project" value="TreeGrafter"/>
</dbReference>
<dbReference type="CDD" id="cd01886">
    <property type="entry name" value="EF-G"/>
    <property type="match status" value="1"/>
</dbReference>
<dbReference type="CDD" id="cd16262">
    <property type="entry name" value="EFG_III"/>
    <property type="match status" value="1"/>
</dbReference>
<dbReference type="CDD" id="cd01434">
    <property type="entry name" value="EFG_mtEFG1_IV"/>
    <property type="match status" value="1"/>
</dbReference>
<dbReference type="CDD" id="cd03713">
    <property type="entry name" value="EFG_mtEFG_C"/>
    <property type="match status" value="1"/>
</dbReference>
<dbReference type="CDD" id="cd04088">
    <property type="entry name" value="EFG_mtEFG_II"/>
    <property type="match status" value="1"/>
</dbReference>
<dbReference type="FunFam" id="2.40.30.10:FF:000006">
    <property type="entry name" value="Elongation factor G"/>
    <property type="match status" value="1"/>
</dbReference>
<dbReference type="FunFam" id="3.30.230.10:FF:000003">
    <property type="entry name" value="Elongation factor G"/>
    <property type="match status" value="1"/>
</dbReference>
<dbReference type="FunFam" id="3.30.70.240:FF:000001">
    <property type="entry name" value="Elongation factor G"/>
    <property type="match status" value="1"/>
</dbReference>
<dbReference type="FunFam" id="3.30.70.870:FF:000001">
    <property type="entry name" value="Elongation factor G"/>
    <property type="match status" value="1"/>
</dbReference>
<dbReference type="FunFam" id="3.40.50.300:FF:000029">
    <property type="entry name" value="Elongation factor G"/>
    <property type="match status" value="1"/>
</dbReference>
<dbReference type="Gene3D" id="3.30.230.10">
    <property type="match status" value="1"/>
</dbReference>
<dbReference type="Gene3D" id="3.30.70.240">
    <property type="match status" value="1"/>
</dbReference>
<dbReference type="Gene3D" id="3.30.70.870">
    <property type="entry name" value="Elongation Factor G (Translational Gtpase), domain 3"/>
    <property type="match status" value="1"/>
</dbReference>
<dbReference type="Gene3D" id="3.40.50.300">
    <property type="entry name" value="P-loop containing nucleotide triphosphate hydrolases"/>
    <property type="match status" value="1"/>
</dbReference>
<dbReference type="Gene3D" id="2.40.30.10">
    <property type="entry name" value="Translation factors"/>
    <property type="match status" value="1"/>
</dbReference>
<dbReference type="HAMAP" id="MF_00054_B">
    <property type="entry name" value="EF_G_EF_2_B"/>
    <property type="match status" value="1"/>
</dbReference>
<dbReference type="InterPro" id="IPR041095">
    <property type="entry name" value="EFG_II"/>
</dbReference>
<dbReference type="InterPro" id="IPR009022">
    <property type="entry name" value="EFG_III"/>
</dbReference>
<dbReference type="InterPro" id="IPR035647">
    <property type="entry name" value="EFG_III/V"/>
</dbReference>
<dbReference type="InterPro" id="IPR047872">
    <property type="entry name" value="EFG_IV"/>
</dbReference>
<dbReference type="InterPro" id="IPR035649">
    <property type="entry name" value="EFG_V"/>
</dbReference>
<dbReference type="InterPro" id="IPR000640">
    <property type="entry name" value="EFG_V-like"/>
</dbReference>
<dbReference type="InterPro" id="IPR004161">
    <property type="entry name" value="EFTu-like_2"/>
</dbReference>
<dbReference type="InterPro" id="IPR031157">
    <property type="entry name" value="G_TR_CS"/>
</dbReference>
<dbReference type="InterPro" id="IPR027417">
    <property type="entry name" value="P-loop_NTPase"/>
</dbReference>
<dbReference type="InterPro" id="IPR020568">
    <property type="entry name" value="Ribosomal_Su5_D2-typ_SF"/>
</dbReference>
<dbReference type="InterPro" id="IPR014721">
    <property type="entry name" value="Ribsml_uS5_D2-typ_fold_subgr"/>
</dbReference>
<dbReference type="InterPro" id="IPR005225">
    <property type="entry name" value="Small_GTP-bd"/>
</dbReference>
<dbReference type="InterPro" id="IPR000795">
    <property type="entry name" value="T_Tr_GTP-bd_dom"/>
</dbReference>
<dbReference type="InterPro" id="IPR009000">
    <property type="entry name" value="Transl_B-barrel_sf"/>
</dbReference>
<dbReference type="InterPro" id="IPR004540">
    <property type="entry name" value="Transl_elong_EFG/EF2"/>
</dbReference>
<dbReference type="InterPro" id="IPR005517">
    <property type="entry name" value="Transl_elong_EFG/EF2_IV"/>
</dbReference>
<dbReference type="NCBIfam" id="TIGR00484">
    <property type="entry name" value="EF-G"/>
    <property type="match status" value="1"/>
</dbReference>
<dbReference type="NCBIfam" id="NF009381">
    <property type="entry name" value="PRK12740.1-5"/>
    <property type="match status" value="1"/>
</dbReference>
<dbReference type="NCBIfam" id="TIGR00231">
    <property type="entry name" value="small_GTP"/>
    <property type="match status" value="1"/>
</dbReference>
<dbReference type="PANTHER" id="PTHR43261:SF1">
    <property type="entry name" value="RIBOSOME-RELEASING FACTOR 2, MITOCHONDRIAL"/>
    <property type="match status" value="1"/>
</dbReference>
<dbReference type="PANTHER" id="PTHR43261">
    <property type="entry name" value="TRANSLATION ELONGATION FACTOR G-RELATED"/>
    <property type="match status" value="1"/>
</dbReference>
<dbReference type="Pfam" id="PF00679">
    <property type="entry name" value="EFG_C"/>
    <property type="match status" value="1"/>
</dbReference>
<dbReference type="Pfam" id="PF14492">
    <property type="entry name" value="EFG_III"/>
    <property type="match status" value="1"/>
</dbReference>
<dbReference type="Pfam" id="PF03764">
    <property type="entry name" value="EFG_IV"/>
    <property type="match status" value="1"/>
</dbReference>
<dbReference type="Pfam" id="PF00009">
    <property type="entry name" value="GTP_EFTU"/>
    <property type="match status" value="1"/>
</dbReference>
<dbReference type="Pfam" id="PF03144">
    <property type="entry name" value="GTP_EFTU_D2"/>
    <property type="match status" value="1"/>
</dbReference>
<dbReference type="PRINTS" id="PR00315">
    <property type="entry name" value="ELONGATNFCT"/>
</dbReference>
<dbReference type="SMART" id="SM00838">
    <property type="entry name" value="EFG_C"/>
    <property type="match status" value="1"/>
</dbReference>
<dbReference type="SMART" id="SM00889">
    <property type="entry name" value="EFG_IV"/>
    <property type="match status" value="1"/>
</dbReference>
<dbReference type="SUPFAM" id="SSF54980">
    <property type="entry name" value="EF-G C-terminal domain-like"/>
    <property type="match status" value="2"/>
</dbReference>
<dbReference type="SUPFAM" id="SSF52540">
    <property type="entry name" value="P-loop containing nucleoside triphosphate hydrolases"/>
    <property type="match status" value="1"/>
</dbReference>
<dbReference type="SUPFAM" id="SSF54211">
    <property type="entry name" value="Ribosomal protein S5 domain 2-like"/>
    <property type="match status" value="1"/>
</dbReference>
<dbReference type="SUPFAM" id="SSF50447">
    <property type="entry name" value="Translation proteins"/>
    <property type="match status" value="1"/>
</dbReference>
<dbReference type="PROSITE" id="PS00301">
    <property type="entry name" value="G_TR_1"/>
    <property type="match status" value="1"/>
</dbReference>
<dbReference type="PROSITE" id="PS51722">
    <property type="entry name" value="G_TR_2"/>
    <property type="match status" value="1"/>
</dbReference>
<feature type="chain" id="PRO_0000091152" description="Elongation factor G 2">
    <location>
        <begin position="1"/>
        <end position="698"/>
    </location>
</feature>
<feature type="domain" description="tr-type G">
    <location>
        <begin position="8"/>
        <end position="290"/>
    </location>
</feature>
<feature type="binding site" evidence="1">
    <location>
        <begin position="17"/>
        <end position="24"/>
    </location>
    <ligand>
        <name>GTP</name>
        <dbReference type="ChEBI" id="CHEBI:37565"/>
    </ligand>
</feature>
<feature type="binding site" evidence="1">
    <location>
        <begin position="88"/>
        <end position="92"/>
    </location>
    <ligand>
        <name>GTP</name>
        <dbReference type="ChEBI" id="CHEBI:37565"/>
    </ligand>
</feature>
<feature type="binding site" evidence="1">
    <location>
        <begin position="142"/>
        <end position="145"/>
    </location>
    <ligand>
        <name>GTP</name>
        <dbReference type="ChEBI" id="CHEBI:37565"/>
    </ligand>
</feature>
<gene>
    <name evidence="1" type="primary">fusA2</name>
    <name type="synonym">fusA-2</name>
    <name type="ordered locus">MCA2375</name>
</gene>
<sequence length="698" mass="76612">MARTTPIERYRNIGIMAHIDAGKTTTTERILFYTGVSHKIGEVHDGAAIMDWMEQEQERGITITSAATTCFWRGMDGSFPEYRINIIDTPGHVDFTIEVERSLRVLDGACAIFCAVGGVEPQSETVWRQADKYGVPRLAFVNKMDRAGADFLRVVDQIRSRLGGSPVPVQLPIGAEDEFKGVVDLLRMKAIWWDDSTQGMRFSLGDVPAEMVAACVAWREKMVEAAAEASEDLMEKYLEGGELTVEEIKRGLRVRTLANEIVPVLCGSAFKNKGVQAMLDAVVDYLPSPVDTPPVVGIGEGGLESSRKSCDNASFSALAFKIATDPYVGVLTFIRVYSGVLSSGDTVYNPVKDRRERIGRLVQMHANNREEVKEVRAGDIAAAIGLKDVTTGDTLCDPKDVITLERMEFPEPVISVAVEPKTKADQEKMGIALNKLAQEDPSFRVRTDEESGQTIISGMGELHLEIIVDRMKREFGVDANVGAPQVAYRETIRKAVEQEGKYVRQTGGRGQYGHVWLRIEPLDPGGGYEFVNGIVGGVVPKEYIPAVDKGIQEQLQNGVLAGFPVVDVRVTLFDGSYHDVDSSEMAFKIAGSMAFKEGARKASPVLLEPIMKVEVVTPEEYMGDVVGDINRRRGIVQGMDEVPAGKVIRCEVPLSEMFGYATDLRSATQGRATYSMHFEKYVEAPTHVADAVIKKSVS</sequence>
<accession>Q605A9</accession>
<reference key="1">
    <citation type="journal article" date="2004" name="PLoS Biol.">
        <title>Genomic insights into methanotrophy: the complete genome sequence of Methylococcus capsulatus (Bath).</title>
        <authorList>
            <person name="Ward N.L."/>
            <person name="Larsen O."/>
            <person name="Sakwa J."/>
            <person name="Bruseth L."/>
            <person name="Khouri H.M."/>
            <person name="Durkin A.S."/>
            <person name="Dimitrov G."/>
            <person name="Jiang L."/>
            <person name="Scanlan D."/>
            <person name="Kang K.H."/>
            <person name="Lewis M.R."/>
            <person name="Nelson K.E."/>
            <person name="Methe B.A."/>
            <person name="Wu M."/>
            <person name="Heidelberg J.F."/>
            <person name="Paulsen I.T."/>
            <person name="Fouts D.E."/>
            <person name="Ravel J."/>
            <person name="Tettelin H."/>
            <person name="Ren Q."/>
            <person name="Read T.D."/>
            <person name="DeBoy R.T."/>
            <person name="Seshadri R."/>
            <person name="Salzberg S.L."/>
            <person name="Jensen H.B."/>
            <person name="Birkeland N.K."/>
            <person name="Nelson W.C."/>
            <person name="Dodson R.J."/>
            <person name="Grindhaug S.H."/>
            <person name="Holt I.E."/>
            <person name="Eidhammer I."/>
            <person name="Jonasen I."/>
            <person name="Vanaken S."/>
            <person name="Utterback T.R."/>
            <person name="Feldblyum T.V."/>
            <person name="Fraser C.M."/>
            <person name="Lillehaug J.R."/>
            <person name="Eisen J.A."/>
        </authorList>
    </citation>
    <scope>NUCLEOTIDE SEQUENCE [LARGE SCALE GENOMIC DNA]</scope>
    <source>
        <strain>ATCC 33009 / NCIMB 11132 / Bath</strain>
    </source>
</reference>
<keyword id="KW-0963">Cytoplasm</keyword>
<keyword id="KW-0251">Elongation factor</keyword>
<keyword id="KW-0342">GTP-binding</keyword>
<keyword id="KW-0547">Nucleotide-binding</keyword>
<keyword id="KW-0648">Protein biosynthesis</keyword>
<keyword id="KW-1185">Reference proteome</keyword>
<comment type="function">
    <text evidence="1">Catalyzes the GTP-dependent ribosomal translocation step during translation elongation. During this step, the ribosome changes from the pre-translocational (PRE) to the post-translocational (POST) state as the newly formed A-site-bound peptidyl-tRNA and P-site-bound deacylated tRNA move to the P and E sites, respectively. Catalyzes the coordinated movement of the two tRNA molecules, the mRNA and conformational changes in the ribosome.</text>
</comment>
<comment type="subcellular location">
    <subcellularLocation>
        <location evidence="1">Cytoplasm</location>
    </subcellularLocation>
</comment>
<comment type="similarity">
    <text evidence="1">Belongs to the TRAFAC class translation factor GTPase superfamily. Classic translation factor GTPase family. EF-G/EF-2 subfamily.</text>
</comment>
<evidence type="ECO:0000255" key="1">
    <source>
        <dbReference type="HAMAP-Rule" id="MF_00054"/>
    </source>
</evidence>
<proteinExistence type="inferred from homology"/>